<gene>
    <name evidence="1" type="primary">hemE</name>
    <name type="ordered locus">WS0370</name>
</gene>
<name>DCUP_WOLSU</name>
<comment type="function">
    <text evidence="1">Catalyzes the decarboxylation of four acetate groups of uroporphyrinogen-III to yield coproporphyrinogen-III.</text>
</comment>
<comment type="catalytic activity">
    <reaction evidence="1">
        <text>uroporphyrinogen III + 4 H(+) = coproporphyrinogen III + 4 CO2</text>
        <dbReference type="Rhea" id="RHEA:19865"/>
        <dbReference type="ChEBI" id="CHEBI:15378"/>
        <dbReference type="ChEBI" id="CHEBI:16526"/>
        <dbReference type="ChEBI" id="CHEBI:57308"/>
        <dbReference type="ChEBI" id="CHEBI:57309"/>
        <dbReference type="EC" id="4.1.1.37"/>
    </reaction>
</comment>
<comment type="pathway">
    <text evidence="1">Porphyrin-containing compound metabolism; protoporphyrin-IX biosynthesis; coproporphyrinogen-III from 5-aminolevulinate: step 4/4.</text>
</comment>
<comment type="subunit">
    <text evidence="1">Homodimer.</text>
</comment>
<comment type="subcellular location">
    <subcellularLocation>
        <location evidence="1">Cytoplasm</location>
    </subcellularLocation>
</comment>
<comment type="similarity">
    <text evidence="1">Belongs to the uroporphyrinogen decarboxylase family.</text>
</comment>
<feature type="chain" id="PRO_0000187661" description="Uroporphyrinogen decarboxylase">
    <location>
        <begin position="1"/>
        <end position="340"/>
    </location>
</feature>
<feature type="binding site" evidence="1">
    <location>
        <begin position="21"/>
        <end position="25"/>
    </location>
    <ligand>
        <name>substrate</name>
    </ligand>
</feature>
<feature type="binding site" evidence="1">
    <location>
        <position position="40"/>
    </location>
    <ligand>
        <name>substrate</name>
    </ligand>
</feature>
<feature type="binding site" evidence="1">
    <location>
        <position position="71"/>
    </location>
    <ligand>
        <name>substrate</name>
    </ligand>
</feature>
<feature type="binding site" evidence="1">
    <location>
        <position position="147"/>
    </location>
    <ligand>
        <name>substrate</name>
    </ligand>
</feature>
<feature type="binding site" evidence="1">
    <location>
        <position position="202"/>
    </location>
    <ligand>
        <name>substrate</name>
    </ligand>
</feature>
<feature type="binding site" evidence="1">
    <location>
        <position position="316"/>
    </location>
    <ligand>
        <name>substrate</name>
    </ligand>
</feature>
<feature type="site" description="Transition state stabilizer" evidence="1">
    <location>
        <position position="71"/>
    </location>
</feature>
<accession>Q7MAA5</accession>
<sequence length="340" mass="38568">MIFIDACKRQPTPYTPIWMMRQAGRYLTEYMQTRERAGSFLDLCKNPELACEVTLQPVEILDVDAAILFSDILVVPMEMGLELGFYQGEGPRFSQTIRTQKDLLLLQEGAENRLGYVYEAIHRIRESLHQEKALIGFCGSPWTLATYMIEGEGSKTYAHSKKMLYSDPKLLHAILAQVSEALKGYLAKQIEAGVNAVMVFDSWAAALEESVYFEFSWEYMKEIASFVKARYPHIPVMLFPKGIAGFLDKIEGDFDVFGVDWSTPMDLAKAKLGDRYVLQGNLEPARLYDRAKMEEGVDHILSIMGKESGHVFNLGHGMMPDLPRENAIELVKMVRQKSAR</sequence>
<evidence type="ECO:0000255" key="1">
    <source>
        <dbReference type="HAMAP-Rule" id="MF_00218"/>
    </source>
</evidence>
<dbReference type="EC" id="4.1.1.37" evidence="1"/>
<dbReference type="EMBL" id="BX571658">
    <property type="protein sequence ID" value="CAE09518.1"/>
    <property type="molecule type" value="Genomic_DNA"/>
</dbReference>
<dbReference type="RefSeq" id="WP_011138318.1">
    <property type="nucleotide sequence ID" value="NC_005090.1"/>
</dbReference>
<dbReference type="SMR" id="Q7MAA5"/>
<dbReference type="STRING" id="273121.WS0370"/>
<dbReference type="KEGG" id="wsu:WS0370"/>
<dbReference type="eggNOG" id="COG0407">
    <property type="taxonomic scope" value="Bacteria"/>
</dbReference>
<dbReference type="HOGENOM" id="CLU_040933_0_0_7"/>
<dbReference type="UniPathway" id="UPA00251">
    <property type="reaction ID" value="UER00321"/>
</dbReference>
<dbReference type="Proteomes" id="UP000000422">
    <property type="component" value="Chromosome"/>
</dbReference>
<dbReference type="GO" id="GO:0005829">
    <property type="term" value="C:cytosol"/>
    <property type="evidence" value="ECO:0007669"/>
    <property type="project" value="TreeGrafter"/>
</dbReference>
<dbReference type="GO" id="GO:0004853">
    <property type="term" value="F:uroporphyrinogen decarboxylase activity"/>
    <property type="evidence" value="ECO:0007669"/>
    <property type="project" value="UniProtKB-UniRule"/>
</dbReference>
<dbReference type="GO" id="GO:0019353">
    <property type="term" value="P:protoporphyrinogen IX biosynthetic process from glutamate"/>
    <property type="evidence" value="ECO:0007669"/>
    <property type="project" value="TreeGrafter"/>
</dbReference>
<dbReference type="CDD" id="cd00717">
    <property type="entry name" value="URO-D"/>
    <property type="match status" value="1"/>
</dbReference>
<dbReference type="FunFam" id="3.20.20.210:FF:000007">
    <property type="entry name" value="Uroporphyrinogen decarboxylase"/>
    <property type="match status" value="1"/>
</dbReference>
<dbReference type="Gene3D" id="3.20.20.210">
    <property type="match status" value="1"/>
</dbReference>
<dbReference type="HAMAP" id="MF_00218">
    <property type="entry name" value="URO_D"/>
    <property type="match status" value="1"/>
</dbReference>
<dbReference type="InterPro" id="IPR038071">
    <property type="entry name" value="UROD/MetE-like_sf"/>
</dbReference>
<dbReference type="InterPro" id="IPR006361">
    <property type="entry name" value="Uroporphyrinogen_deCO2ase_HemE"/>
</dbReference>
<dbReference type="InterPro" id="IPR000257">
    <property type="entry name" value="Uroporphyrinogen_deCOase"/>
</dbReference>
<dbReference type="NCBIfam" id="TIGR01464">
    <property type="entry name" value="hemE"/>
    <property type="match status" value="1"/>
</dbReference>
<dbReference type="PANTHER" id="PTHR21091">
    <property type="entry name" value="METHYLTETRAHYDROFOLATE:HOMOCYSTEINE METHYLTRANSFERASE RELATED"/>
    <property type="match status" value="1"/>
</dbReference>
<dbReference type="PANTHER" id="PTHR21091:SF169">
    <property type="entry name" value="UROPORPHYRINOGEN DECARBOXYLASE"/>
    <property type="match status" value="1"/>
</dbReference>
<dbReference type="Pfam" id="PF01208">
    <property type="entry name" value="URO-D"/>
    <property type="match status" value="1"/>
</dbReference>
<dbReference type="SUPFAM" id="SSF51726">
    <property type="entry name" value="UROD/MetE-like"/>
    <property type="match status" value="1"/>
</dbReference>
<dbReference type="PROSITE" id="PS00906">
    <property type="entry name" value="UROD_1"/>
    <property type="match status" value="1"/>
</dbReference>
<dbReference type="PROSITE" id="PS00907">
    <property type="entry name" value="UROD_2"/>
    <property type="match status" value="1"/>
</dbReference>
<protein>
    <recommendedName>
        <fullName evidence="1">Uroporphyrinogen decarboxylase</fullName>
        <shortName evidence="1">UPD</shortName>
        <shortName evidence="1">URO-D</shortName>
        <ecNumber evidence="1">4.1.1.37</ecNumber>
    </recommendedName>
</protein>
<organism>
    <name type="scientific">Wolinella succinogenes (strain ATCC 29543 / DSM 1740 / CCUG 13145 / JCM 31913 / LMG 7466 / NCTC 11488 / FDC 602W)</name>
    <name type="common">Vibrio succinogenes</name>
    <dbReference type="NCBI Taxonomy" id="273121"/>
    <lineage>
        <taxon>Bacteria</taxon>
        <taxon>Pseudomonadati</taxon>
        <taxon>Campylobacterota</taxon>
        <taxon>Epsilonproteobacteria</taxon>
        <taxon>Campylobacterales</taxon>
        <taxon>Helicobacteraceae</taxon>
        <taxon>Wolinella</taxon>
    </lineage>
</organism>
<keyword id="KW-0963">Cytoplasm</keyword>
<keyword id="KW-0210">Decarboxylase</keyword>
<keyword id="KW-0456">Lyase</keyword>
<keyword id="KW-0627">Porphyrin biosynthesis</keyword>
<keyword id="KW-1185">Reference proteome</keyword>
<reference key="1">
    <citation type="journal article" date="2003" name="Proc. Natl. Acad. Sci. U.S.A.">
        <title>Complete genome sequence and analysis of Wolinella succinogenes.</title>
        <authorList>
            <person name="Baar C."/>
            <person name="Eppinger M."/>
            <person name="Raddatz G."/>
            <person name="Simon J."/>
            <person name="Lanz C."/>
            <person name="Klimmek O."/>
            <person name="Nandakumar R."/>
            <person name="Gross R."/>
            <person name="Rosinus A."/>
            <person name="Keller H."/>
            <person name="Jagtap P."/>
            <person name="Linke B."/>
            <person name="Meyer F."/>
            <person name="Lederer H."/>
            <person name="Schuster S.C."/>
        </authorList>
    </citation>
    <scope>NUCLEOTIDE SEQUENCE [LARGE SCALE GENOMIC DNA]</scope>
    <source>
        <strain>ATCC 29543 / DSM 1740 / CCUG 13145 / JCM 31913 / LMG 7466 / NCTC 11488 / FDC 602W</strain>
    </source>
</reference>
<proteinExistence type="inferred from homology"/>